<gene>
    <name evidence="1" type="primary">rplQ</name>
    <name type="ordered locus">RPR_06105</name>
</gene>
<keyword id="KW-0687">Ribonucleoprotein</keyword>
<keyword id="KW-0689">Ribosomal protein</keyword>
<dbReference type="EMBL" id="CP001227">
    <property type="protein sequence ID" value="ACR47751.1"/>
    <property type="molecule type" value="Genomic_DNA"/>
</dbReference>
<dbReference type="RefSeq" id="WP_004997844.1">
    <property type="nucleotide sequence ID" value="NC_012730.1"/>
</dbReference>
<dbReference type="SMR" id="C4K2F4"/>
<dbReference type="GeneID" id="79937645"/>
<dbReference type="GeneID" id="95361461"/>
<dbReference type="KEGG" id="rpk:RPR_06105"/>
<dbReference type="HOGENOM" id="CLU_074407_2_0_5"/>
<dbReference type="Proteomes" id="UP000005015">
    <property type="component" value="Chromosome"/>
</dbReference>
<dbReference type="GO" id="GO:0022625">
    <property type="term" value="C:cytosolic large ribosomal subunit"/>
    <property type="evidence" value="ECO:0007669"/>
    <property type="project" value="TreeGrafter"/>
</dbReference>
<dbReference type="GO" id="GO:0003735">
    <property type="term" value="F:structural constituent of ribosome"/>
    <property type="evidence" value="ECO:0007669"/>
    <property type="project" value="InterPro"/>
</dbReference>
<dbReference type="GO" id="GO:0006412">
    <property type="term" value="P:translation"/>
    <property type="evidence" value="ECO:0007669"/>
    <property type="project" value="UniProtKB-UniRule"/>
</dbReference>
<dbReference type="FunFam" id="3.90.1030.10:FF:000001">
    <property type="entry name" value="50S ribosomal protein L17"/>
    <property type="match status" value="1"/>
</dbReference>
<dbReference type="Gene3D" id="3.90.1030.10">
    <property type="entry name" value="Ribosomal protein L17"/>
    <property type="match status" value="1"/>
</dbReference>
<dbReference type="HAMAP" id="MF_01368">
    <property type="entry name" value="Ribosomal_bL17"/>
    <property type="match status" value="1"/>
</dbReference>
<dbReference type="InterPro" id="IPR000456">
    <property type="entry name" value="Ribosomal_bL17"/>
</dbReference>
<dbReference type="InterPro" id="IPR047859">
    <property type="entry name" value="Ribosomal_bL17_CS"/>
</dbReference>
<dbReference type="InterPro" id="IPR036373">
    <property type="entry name" value="Ribosomal_bL17_sf"/>
</dbReference>
<dbReference type="NCBIfam" id="TIGR00059">
    <property type="entry name" value="L17"/>
    <property type="match status" value="1"/>
</dbReference>
<dbReference type="PANTHER" id="PTHR14413:SF16">
    <property type="entry name" value="LARGE RIBOSOMAL SUBUNIT PROTEIN BL17M"/>
    <property type="match status" value="1"/>
</dbReference>
<dbReference type="PANTHER" id="PTHR14413">
    <property type="entry name" value="RIBOSOMAL PROTEIN L17"/>
    <property type="match status" value="1"/>
</dbReference>
<dbReference type="Pfam" id="PF01196">
    <property type="entry name" value="Ribosomal_L17"/>
    <property type="match status" value="1"/>
</dbReference>
<dbReference type="SUPFAM" id="SSF64263">
    <property type="entry name" value="Prokaryotic ribosomal protein L17"/>
    <property type="match status" value="1"/>
</dbReference>
<dbReference type="PROSITE" id="PS01167">
    <property type="entry name" value="RIBOSOMAL_L17"/>
    <property type="match status" value="1"/>
</dbReference>
<accession>C4K2F4</accession>
<evidence type="ECO:0000255" key="1">
    <source>
        <dbReference type="HAMAP-Rule" id="MF_01368"/>
    </source>
</evidence>
<evidence type="ECO:0000305" key="2"/>
<feature type="chain" id="PRO_1000215018" description="Large ribosomal subunit protein bL17">
    <location>
        <begin position="1"/>
        <end position="136"/>
    </location>
</feature>
<name>RL17_RICPU</name>
<protein>
    <recommendedName>
        <fullName evidence="1">Large ribosomal subunit protein bL17</fullName>
    </recommendedName>
    <alternativeName>
        <fullName evidence="2">50S ribosomal protein L17</fullName>
    </alternativeName>
</protein>
<sequence>MRHKIKGRKLNVTSSHRQAMLANMAVALVTHEQIKTTLPKAKELRPYIETLITKAKKADLMVRRSVLSKIKDKTAVEKLINILGTRYKDRPGGYTRIIKAGFRYGDLAPIAYIEFVDRDINAKGNIQQDANEEIKN</sequence>
<proteinExistence type="inferred from homology"/>
<reference key="1">
    <citation type="journal article" date="2009" name="PLoS ONE">
        <title>Genome sequence of the endosymbiont Rickettsia peacockii and comparison with virulent Rickettsia rickettsii: identification of virulence factors.</title>
        <authorList>
            <person name="Felsheim R.F."/>
            <person name="Kurtti T.J."/>
            <person name="Munderloh U.G."/>
        </authorList>
    </citation>
    <scope>NUCLEOTIDE SEQUENCE [LARGE SCALE GENOMIC DNA]</scope>
    <source>
        <strain>Rustic</strain>
    </source>
</reference>
<comment type="subunit">
    <text evidence="1">Part of the 50S ribosomal subunit. Contacts protein L32.</text>
</comment>
<comment type="similarity">
    <text evidence="1">Belongs to the bacterial ribosomal protein bL17 family.</text>
</comment>
<organism>
    <name type="scientific">Rickettsia peacockii (strain Rustic)</name>
    <dbReference type="NCBI Taxonomy" id="562019"/>
    <lineage>
        <taxon>Bacteria</taxon>
        <taxon>Pseudomonadati</taxon>
        <taxon>Pseudomonadota</taxon>
        <taxon>Alphaproteobacteria</taxon>
        <taxon>Rickettsiales</taxon>
        <taxon>Rickettsiaceae</taxon>
        <taxon>Rickettsieae</taxon>
        <taxon>Rickettsia</taxon>
        <taxon>spotted fever group</taxon>
    </lineage>
</organism>